<gene>
    <name evidence="1" type="primary">clpX</name>
    <name type="ordered locus">NATL1_21261</name>
</gene>
<feature type="chain" id="PRO_1000024613" description="ATP-dependent Clp protease ATP-binding subunit ClpX">
    <location>
        <begin position="1"/>
        <end position="451"/>
    </location>
</feature>
<feature type="domain" description="ClpX-type ZB" evidence="2">
    <location>
        <begin position="1"/>
        <end position="51"/>
    </location>
</feature>
<feature type="region of interest" description="Disordered" evidence="3">
    <location>
        <begin position="50"/>
        <end position="73"/>
    </location>
</feature>
<feature type="binding site" evidence="2">
    <location>
        <position position="10"/>
    </location>
    <ligand>
        <name>Zn(2+)</name>
        <dbReference type="ChEBI" id="CHEBI:29105"/>
    </ligand>
</feature>
<feature type="binding site" evidence="2">
    <location>
        <position position="13"/>
    </location>
    <ligand>
        <name>Zn(2+)</name>
        <dbReference type="ChEBI" id="CHEBI:29105"/>
    </ligand>
</feature>
<feature type="binding site" evidence="2">
    <location>
        <position position="32"/>
    </location>
    <ligand>
        <name>Zn(2+)</name>
        <dbReference type="ChEBI" id="CHEBI:29105"/>
    </ligand>
</feature>
<feature type="binding site" evidence="2">
    <location>
        <position position="35"/>
    </location>
    <ligand>
        <name>Zn(2+)</name>
        <dbReference type="ChEBI" id="CHEBI:29105"/>
    </ligand>
</feature>
<feature type="binding site" evidence="1">
    <location>
        <begin position="142"/>
        <end position="149"/>
    </location>
    <ligand>
        <name>ATP</name>
        <dbReference type="ChEBI" id="CHEBI:30616"/>
    </ligand>
</feature>
<evidence type="ECO:0000255" key="1">
    <source>
        <dbReference type="HAMAP-Rule" id="MF_00175"/>
    </source>
</evidence>
<evidence type="ECO:0000255" key="2">
    <source>
        <dbReference type="PROSITE-ProRule" id="PRU01250"/>
    </source>
</evidence>
<evidence type="ECO:0000256" key="3">
    <source>
        <dbReference type="SAM" id="MobiDB-lite"/>
    </source>
</evidence>
<dbReference type="EMBL" id="CP000553">
    <property type="protein sequence ID" value="ABM76682.1"/>
    <property type="molecule type" value="Genomic_DNA"/>
</dbReference>
<dbReference type="RefSeq" id="WP_011295599.1">
    <property type="nucleotide sequence ID" value="NC_008819.1"/>
</dbReference>
<dbReference type="SMR" id="A2C5C2"/>
<dbReference type="KEGG" id="pme:NATL1_21261"/>
<dbReference type="eggNOG" id="COG1219">
    <property type="taxonomic scope" value="Bacteria"/>
</dbReference>
<dbReference type="HOGENOM" id="CLU_014218_8_2_3"/>
<dbReference type="Proteomes" id="UP000002592">
    <property type="component" value="Chromosome"/>
</dbReference>
<dbReference type="GO" id="GO:0009376">
    <property type="term" value="C:HslUV protease complex"/>
    <property type="evidence" value="ECO:0007669"/>
    <property type="project" value="TreeGrafter"/>
</dbReference>
<dbReference type="GO" id="GO:0005524">
    <property type="term" value="F:ATP binding"/>
    <property type="evidence" value="ECO:0007669"/>
    <property type="project" value="UniProtKB-UniRule"/>
</dbReference>
<dbReference type="GO" id="GO:0016887">
    <property type="term" value="F:ATP hydrolysis activity"/>
    <property type="evidence" value="ECO:0007669"/>
    <property type="project" value="InterPro"/>
</dbReference>
<dbReference type="GO" id="GO:0140662">
    <property type="term" value="F:ATP-dependent protein folding chaperone"/>
    <property type="evidence" value="ECO:0007669"/>
    <property type="project" value="InterPro"/>
</dbReference>
<dbReference type="GO" id="GO:0046983">
    <property type="term" value="F:protein dimerization activity"/>
    <property type="evidence" value="ECO:0007669"/>
    <property type="project" value="InterPro"/>
</dbReference>
<dbReference type="GO" id="GO:0051082">
    <property type="term" value="F:unfolded protein binding"/>
    <property type="evidence" value="ECO:0007669"/>
    <property type="project" value="UniProtKB-UniRule"/>
</dbReference>
<dbReference type="GO" id="GO:0008270">
    <property type="term" value="F:zinc ion binding"/>
    <property type="evidence" value="ECO:0007669"/>
    <property type="project" value="InterPro"/>
</dbReference>
<dbReference type="GO" id="GO:0051301">
    <property type="term" value="P:cell division"/>
    <property type="evidence" value="ECO:0007669"/>
    <property type="project" value="TreeGrafter"/>
</dbReference>
<dbReference type="GO" id="GO:0051603">
    <property type="term" value="P:proteolysis involved in protein catabolic process"/>
    <property type="evidence" value="ECO:0007669"/>
    <property type="project" value="TreeGrafter"/>
</dbReference>
<dbReference type="CDD" id="cd19497">
    <property type="entry name" value="RecA-like_ClpX"/>
    <property type="match status" value="1"/>
</dbReference>
<dbReference type="FunFam" id="1.10.8.60:FF:000002">
    <property type="entry name" value="ATP-dependent Clp protease ATP-binding subunit ClpX"/>
    <property type="match status" value="1"/>
</dbReference>
<dbReference type="FunFam" id="3.40.50.300:FF:000005">
    <property type="entry name" value="ATP-dependent Clp protease ATP-binding subunit ClpX"/>
    <property type="match status" value="1"/>
</dbReference>
<dbReference type="Gene3D" id="1.10.8.60">
    <property type="match status" value="1"/>
</dbReference>
<dbReference type="Gene3D" id="6.20.220.10">
    <property type="entry name" value="ClpX chaperone, C4-type zinc finger domain"/>
    <property type="match status" value="1"/>
</dbReference>
<dbReference type="Gene3D" id="3.40.50.300">
    <property type="entry name" value="P-loop containing nucleotide triphosphate hydrolases"/>
    <property type="match status" value="1"/>
</dbReference>
<dbReference type="HAMAP" id="MF_00175">
    <property type="entry name" value="ClpX"/>
    <property type="match status" value="1"/>
</dbReference>
<dbReference type="InterPro" id="IPR003593">
    <property type="entry name" value="AAA+_ATPase"/>
</dbReference>
<dbReference type="InterPro" id="IPR050052">
    <property type="entry name" value="ATP-dep_Clp_protease_ClpX"/>
</dbReference>
<dbReference type="InterPro" id="IPR003959">
    <property type="entry name" value="ATPase_AAA_core"/>
</dbReference>
<dbReference type="InterPro" id="IPR019489">
    <property type="entry name" value="Clp_ATPase_C"/>
</dbReference>
<dbReference type="InterPro" id="IPR004487">
    <property type="entry name" value="Clp_protease_ATP-bd_su_ClpX"/>
</dbReference>
<dbReference type="InterPro" id="IPR046425">
    <property type="entry name" value="ClpX_bact"/>
</dbReference>
<dbReference type="InterPro" id="IPR027417">
    <property type="entry name" value="P-loop_NTPase"/>
</dbReference>
<dbReference type="InterPro" id="IPR010603">
    <property type="entry name" value="Znf_CppX_C4"/>
</dbReference>
<dbReference type="InterPro" id="IPR038366">
    <property type="entry name" value="Znf_CppX_C4_sf"/>
</dbReference>
<dbReference type="NCBIfam" id="TIGR00382">
    <property type="entry name" value="clpX"/>
    <property type="match status" value="1"/>
</dbReference>
<dbReference type="NCBIfam" id="NF003745">
    <property type="entry name" value="PRK05342.1"/>
    <property type="match status" value="1"/>
</dbReference>
<dbReference type="PANTHER" id="PTHR48102:SF7">
    <property type="entry name" value="ATP-DEPENDENT CLP PROTEASE ATP-BINDING SUBUNIT CLPX-LIKE, MITOCHONDRIAL"/>
    <property type="match status" value="1"/>
</dbReference>
<dbReference type="PANTHER" id="PTHR48102">
    <property type="entry name" value="ATP-DEPENDENT CLP PROTEASE ATP-BINDING SUBUNIT CLPX-LIKE, MITOCHONDRIAL-RELATED"/>
    <property type="match status" value="1"/>
</dbReference>
<dbReference type="Pfam" id="PF07724">
    <property type="entry name" value="AAA_2"/>
    <property type="match status" value="1"/>
</dbReference>
<dbReference type="Pfam" id="PF10431">
    <property type="entry name" value="ClpB_D2-small"/>
    <property type="match status" value="1"/>
</dbReference>
<dbReference type="Pfam" id="PF06689">
    <property type="entry name" value="zf-C4_ClpX"/>
    <property type="match status" value="1"/>
</dbReference>
<dbReference type="SMART" id="SM00382">
    <property type="entry name" value="AAA"/>
    <property type="match status" value="1"/>
</dbReference>
<dbReference type="SMART" id="SM01086">
    <property type="entry name" value="ClpB_D2-small"/>
    <property type="match status" value="1"/>
</dbReference>
<dbReference type="SMART" id="SM00994">
    <property type="entry name" value="zf-C4_ClpX"/>
    <property type="match status" value="1"/>
</dbReference>
<dbReference type="SUPFAM" id="SSF57716">
    <property type="entry name" value="Glucocorticoid receptor-like (DNA-binding domain)"/>
    <property type="match status" value="1"/>
</dbReference>
<dbReference type="SUPFAM" id="SSF52540">
    <property type="entry name" value="P-loop containing nucleoside triphosphate hydrolases"/>
    <property type="match status" value="1"/>
</dbReference>
<dbReference type="PROSITE" id="PS51902">
    <property type="entry name" value="CLPX_ZB"/>
    <property type="match status" value="1"/>
</dbReference>
<name>CLPX_PROM1</name>
<sequence>MAKFEAHLKCSFCGKAQDQVRKLIAGPGVYICDECIDLCNEILDEELIDNPTHQRNGHEQSRKAKAATTTAKPAPTLASIPKPIEIKKFLDAQVVGQEPAKKILSVAVYNHYKRLAWKGDGSGETDLTATKLQKSNILLIGPTGCGKTLLAQTLAEMLDVPFAVADATTLTEAGYVGEDVENILLRLLQKADMDVDLAQRGIIYIDEIDKIARKSENPSITRDVSGEGVQQALLKMLEGTVANVPPQGGRKHPYGDSIQIDTSQILFICGGAFVGLDDVVEKRLGKNSIGFIQNENRTRTKSNRDRVGADLINDLEPDDLVKYGLIPEFIGRMPVSAILEPLNAKALESILTEPRDALVKQFRTLLSMDNVELSFDEDAVEAIAQEAYKRKTGARALRGIVEEIMLDLMYSLPSQTKIKNFNVTKKMVDESTGGKVVPLLSNEKRIVKESA</sequence>
<comment type="function">
    <text evidence="1">ATP-dependent specificity component of the Clp protease. It directs the protease to specific substrates. Can perform chaperone functions in the absence of ClpP.</text>
</comment>
<comment type="subunit">
    <text evidence="1">Component of the ClpX-ClpP complex. Forms a hexameric ring that, in the presence of ATP, binds to fourteen ClpP subunits assembled into a disk-like structure with a central cavity, resembling the structure of eukaryotic proteasomes.</text>
</comment>
<comment type="similarity">
    <text evidence="1">Belongs to the ClpX chaperone family.</text>
</comment>
<keyword id="KW-0067">ATP-binding</keyword>
<keyword id="KW-0143">Chaperone</keyword>
<keyword id="KW-0479">Metal-binding</keyword>
<keyword id="KW-0547">Nucleotide-binding</keyword>
<keyword id="KW-0862">Zinc</keyword>
<reference key="1">
    <citation type="journal article" date="2007" name="PLoS Genet.">
        <title>Patterns and implications of gene gain and loss in the evolution of Prochlorococcus.</title>
        <authorList>
            <person name="Kettler G.C."/>
            <person name="Martiny A.C."/>
            <person name="Huang K."/>
            <person name="Zucker J."/>
            <person name="Coleman M.L."/>
            <person name="Rodrigue S."/>
            <person name="Chen F."/>
            <person name="Lapidus A."/>
            <person name="Ferriera S."/>
            <person name="Johnson J."/>
            <person name="Steglich C."/>
            <person name="Church G.M."/>
            <person name="Richardson P."/>
            <person name="Chisholm S.W."/>
        </authorList>
    </citation>
    <scope>NUCLEOTIDE SEQUENCE [LARGE SCALE GENOMIC DNA]</scope>
    <source>
        <strain>NATL1A</strain>
    </source>
</reference>
<accession>A2C5C2</accession>
<organism>
    <name type="scientific">Prochlorococcus marinus (strain NATL1A)</name>
    <dbReference type="NCBI Taxonomy" id="167555"/>
    <lineage>
        <taxon>Bacteria</taxon>
        <taxon>Bacillati</taxon>
        <taxon>Cyanobacteriota</taxon>
        <taxon>Cyanophyceae</taxon>
        <taxon>Synechococcales</taxon>
        <taxon>Prochlorococcaceae</taxon>
        <taxon>Prochlorococcus</taxon>
    </lineage>
</organism>
<protein>
    <recommendedName>
        <fullName evidence="1">ATP-dependent Clp protease ATP-binding subunit ClpX</fullName>
    </recommendedName>
</protein>
<proteinExistence type="inferred from homology"/>